<accession>B6YR04</accession>
<evidence type="ECO:0000255" key="1">
    <source>
        <dbReference type="HAMAP-Rule" id="MF_01343"/>
    </source>
</evidence>
<evidence type="ECO:0000305" key="2"/>
<proteinExistence type="inferred from homology"/>
<protein>
    <recommendedName>
        <fullName evidence="1">Small ribosomal subunit protein uS15</fullName>
    </recommendedName>
    <alternativeName>
        <fullName evidence="2">30S ribosomal protein S15</fullName>
    </alternativeName>
</protein>
<sequence length="89" mass="10672">MYLNPEKKKEFFAKYGKSNTDSGSPEGQIALFSYRISHLTEHLKVNRKDYNTERSLKMLVGKRRRLLDYLKRCDIGRYRFIINELGIRR</sequence>
<organism>
    <name type="scientific">Azobacteroides pseudotrichonymphae genomovar. CFP2</name>
    <dbReference type="NCBI Taxonomy" id="511995"/>
    <lineage>
        <taxon>Bacteria</taxon>
        <taxon>Pseudomonadati</taxon>
        <taxon>Bacteroidota</taxon>
        <taxon>Bacteroidia</taxon>
        <taxon>Bacteroidales</taxon>
        <taxon>Candidatus Azobacteroides</taxon>
    </lineage>
</organism>
<reference key="1">
    <citation type="journal article" date="2008" name="Science">
        <title>Genome of an endosymbiont coupling N2 fixation to cellulolysis within RT protist cells in termite gut.</title>
        <authorList>
            <person name="Hongoh Y."/>
            <person name="Sharma V.K."/>
            <person name="Prakash T."/>
            <person name="Noda S."/>
            <person name="Toh H."/>
            <person name="Taylor T.D."/>
            <person name="Kudo T."/>
            <person name="Sakaki Y."/>
            <person name="Toyoda A."/>
            <person name="Hattori M."/>
            <person name="Ohkuma M."/>
        </authorList>
    </citation>
    <scope>NUCLEOTIDE SEQUENCE [LARGE SCALE GENOMIC DNA]</scope>
</reference>
<feature type="chain" id="PRO_1000143072" description="Small ribosomal subunit protein uS15">
    <location>
        <begin position="1"/>
        <end position="89"/>
    </location>
</feature>
<dbReference type="EMBL" id="AP010656">
    <property type="protein sequence ID" value="BAG83626.1"/>
    <property type="molecule type" value="Genomic_DNA"/>
</dbReference>
<dbReference type="RefSeq" id="WP_012573387.1">
    <property type="nucleotide sequence ID" value="NC_011565.1"/>
</dbReference>
<dbReference type="SMR" id="B6YR04"/>
<dbReference type="STRING" id="511995.CFPG_363"/>
<dbReference type="KEGG" id="aps:CFPG_363"/>
<dbReference type="eggNOG" id="COG0184">
    <property type="taxonomic scope" value="Bacteria"/>
</dbReference>
<dbReference type="HOGENOM" id="CLU_148518_0_1_10"/>
<dbReference type="OrthoDB" id="9799262at2"/>
<dbReference type="Proteomes" id="UP000000723">
    <property type="component" value="Chromosome"/>
</dbReference>
<dbReference type="GO" id="GO:0022627">
    <property type="term" value="C:cytosolic small ribosomal subunit"/>
    <property type="evidence" value="ECO:0007669"/>
    <property type="project" value="TreeGrafter"/>
</dbReference>
<dbReference type="GO" id="GO:0019843">
    <property type="term" value="F:rRNA binding"/>
    <property type="evidence" value="ECO:0007669"/>
    <property type="project" value="UniProtKB-UniRule"/>
</dbReference>
<dbReference type="GO" id="GO:0003735">
    <property type="term" value="F:structural constituent of ribosome"/>
    <property type="evidence" value="ECO:0007669"/>
    <property type="project" value="InterPro"/>
</dbReference>
<dbReference type="GO" id="GO:0006412">
    <property type="term" value="P:translation"/>
    <property type="evidence" value="ECO:0007669"/>
    <property type="project" value="UniProtKB-UniRule"/>
</dbReference>
<dbReference type="CDD" id="cd00353">
    <property type="entry name" value="Ribosomal_S15p_S13e"/>
    <property type="match status" value="1"/>
</dbReference>
<dbReference type="FunFam" id="1.10.287.10:FF:000002">
    <property type="entry name" value="30S ribosomal protein S15"/>
    <property type="match status" value="1"/>
</dbReference>
<dbReference type="Gene3D" id="6.10.250.3130">
    <property type="match status" value="1"/>
</dbReference>
<dbReference type="Gene3D" id="1.10.287.10">
    <property type="entry name" value="S15/NS1, RNA-binding"/>
    <property type="match status" value="1"/>
</dbReference>
<dbReference type="HAMAP" id="MF_01343_B">
    <property type="entry name" value="Ribosomal_uS15_B"/>
    <property type="match status" value="1"/>
</dbReference>
<dbReference type="InterPro" id="IPR000589">
    <property type="entry name" value="Ribosomal_uS15"/>
</dbReference>
<dbReference type="InterPro" id="IPR005290">
    <property type="entry name" value="Ribosomal_uS15_bac-type"/>
</dbReference>
<dbReference type="InterPro" id="IPR009068">
    <property type="entry name" value="uS15_NS1_RNA-bd_sf"/>
</dbReference>
<dbReference type="NCBIfam" id="TIGR00952">
    <property type="entry name" value="S15_bact"/>
    <property type="match status" value="1"/>
</dbReference>
<dbReference type="PANTHER" id="PTHR23321">
    <property type="entry name" value="RIBOSOMAL PROTEIN S15, BACTERIAL AND ORGANELLAR"/>
    <property type="match status" value="1"/>
</dbReference>
<dbReference type="PANTHER" id="PTHR23321:SF26">
    <property type="entry name" value="SMALL RIBOSOMAL SUBUNIT PROTEIN US15M"/>
    <property type="match status" value="1"/>
</dbReference>
<dbReference type="Pfam" id="PF00312">
    <property type="entry name" value="Ribosomal_S15"/>
    <property type="match status" value="1"/>
</dbReference>
<dbReference type="SMART" id="SM01387">
    <property type="entry name" value="Ribosomal_S15"/>
    <property type="match status" value="1"/>
</dbReference>
<dbReference type="SUPFAM" id="SSF47060">
    <property type="entry name" value="S15/NS1 RNA-binding domain"/>
    <property type="match status" value="1"/>
</dbReference>
<dbReference type="PROSITE" id="PS00362">
    <property type="entry name" value="RIBOSOMAL_S15"/>
    <property type="match status" value="1"/>
</dbReference>
<comment type="function">
    <text evidence="1">One of the primary rRNA binding proteins, it binds directly to 16S rRNA where it helps nucleate assembly of the platform of the 30S subunit by binding and bridging several RNA helices of the 16S rRNA.</text>
</comment>
<comment type="function">
    <text evidence="1">Forms an intersubunit bridge (bridge B4) with the 23S rRNA of the 50S subunit in the ribosome.</text>
</comment>
<comment type="subunit">
    <text evidence="1">Part of the 30S ribosomal subunit. Forms a bridge to the 50S subunit in the 70S ribosome, contacting the 23S rRNA.</text>
</comment>
<comment type="similarity">
    <text evidence="1">Belongs to the universal ribosomal protein uS15 family.</text>
</comment>
<gene>
    <name evidence="1" type="primary">rpsO</name>
    <name type="ordered locus">CFPG_363</name>
</gene>
<keyword id="KW-1185">Reference proteome</keyword>
<keyword id="KW-0687">Ribonucleoprotein</keyword>
<keyword id="KW-0689">Ribosomal protein</keyword>
<keyword id="KW-0694">RNA-binding</keyword>
<keyword id="KW-0699">rRNA-binding</keyword>
<name>RS15_AZOPC</name>